<name>MIAA_CERS1</name>
<comment type="function">
    <text evidence="1">Catalyzes the transfer of a dimethylallyl group onto the adenine at position 37 in tRNAs that read codons beginning with uridine, leading to the formation of N6-(dimethylallyl)adenosine (i(6)A).</text>
</comment>
<comment type="catalytic activity">
    <reaction evidence="1">
        <text>adenosine(37) in tRNA + dimethylallyl diphosphate = N(6)-dimethylallyladenosine(37) in tRNA + diphosphate</text>
        <dbReference type="Rhea" id="RHEA:26482"/>
        <dbReference type="Rhea" id="RHEA-COMP:10162"/>
        <dbReference type="Rhea" id="RHEA-COMP:10375"/>
        <dbReference type="ChEBI" id="CHEBI:33019"/>
        <dbReference type="ChEBI" id="CHEBI:57623"/>
        <dbReference type="ChEBI" id="CHEBI:74411"/>
        <dbReference type="ChEBI" id="CHEBI:74415"/>
        <dbReference type="EC" id="2.5.1.75"/>
    </reaction>
</comment>
<comment type="cofactor">
    <cofactor evidence="1">
        <name>Mg(2+)</name>
        <dbReference type="ChEBI" id="CHEBI:18420"/>
    </cofactor>
</comment>
<comment type="subunit">
    <text evidence="1">Monomer.</text>
</comment>
<comment type="similarity">
    <text evidence="1">Belongs to the IPP transferase family.</text>
</comment>
<organism>
    <name type="scientific">Cereibacter sphaeroides (strain ATCC 17029 / ATH 2.4.9)</name>
    <name type="common">Rhodobacter sphaeroides</name>
    <dbReference type="NCBI Taxonomy" id="349101"/>
    <lineage>
        <taxon>Bacteria</taxon>
        <taxon>Pseudomonadati</taxon>
        <taxon>Pseudomonadota</taxon>
        <taxon>Alphaproteobacteria</taxon>
        <taxon>Rhodobacterales</taxon>
        <taxon>Paracoccaceae</taxon>
        <taxon>Cereibacter</taxon>
    </lineage>
</organism>
<protein>
    <recommendedName>
        <fullName evidence="1">tRNA dimethylallyltransferase</fullName>
        <ecNumber evidence="1">2.5.1.75</ecNumber>
    </recommendedName>
    <alternativeName>
        <fullName evidence="1">Dimethylallyl diphosphate:tRNA dimethylallyltransferase</fullName>
        <shortName evidence="1">DMAPP:tRNA dimethylallyltransferase</shortName>
        <shortName evidence="1">DMATase</shortName>
    </alternativeName>
    <alternativeName>
        <fullName evidence="1">Isopentenyl-diphosphate:tRNA isopentenyltransferase</fullName>
        <shortName evidence="1">IPP transferase</shortName>
        <shortName evidence="1">IPPT</shortName>
        <shortName evidence="1">IPTase</shortName>
    </alternativeName>
</protein>
<evidence type="ECO:0000255" key="1">
    <source>
        <dbReference type="HAMAP-Rule" id="MF_00185"/>
    </source>
</evidence>
<evidence type="ECO:0000256" key="2">
    <source>
        <dbReference type="SAM" id="MobiDB-lite"/>
    </source>
</evidence>
<dbReference type="EC" id="2.5.1.75" evidence="1"/>
<dbReference type="EMBL" id="CP000577">
    <property type="protein sequence ID" value="ABN76471.1"/>
    <property type="molecule type" value="Genomic_DNA"/>
</dbReference>
<dbReference type="RefSeq" id="WP_011840972.1">
    <property type="nucleotide sequence ID" value="NC_009049.1"/>
</dbReference>
<dbReference type="SMR" id="A3PJF5"/>
<dbReference type="KEGG" id="rsh:Rsph17029_1361"/>
<dbReference type="HOGENOM" id="CLU_032616_0_1_5"/>
<dbReference type="GO" id="GO:0005524">
    <property type="term" value="F:ATP binding"/>
    <property type="evidence" value="ECO:0007669"/>
    <property type="project" value="UniProtKB-UniRule"/>
</dbReference>
<dbReference type="GO" id="GO:0052381">
    <property type="term" value="F:tRNA dimethylallyltransferase activity"/>
    <property type="evidence" value="ECO:0007669"/>
    <property type="project" value="UniProtKB-UniRule"/>
</dbReference>
<dbReference type="GO" id="GO:0006400">
    <property type="term" value="P:tRNA modification"/>
    <property type="evidence" value="ECO:0007669"/>
    <property type="project" value="TreeGrafter"/>
</dbReference>
<dbReference type="Gene3D" id="1.10.20.140">
    <property type="match status" value="1"/>
</dbReference>
<dbReference type="Gene3D" id="3.40.50.300">
    <property type="entry name" value="P-loop containing nucleotide triphosphate hydrolases"/>
    <property type="match status" value="1"/>
</dbReference>
<dbReference type="HAMAP" id="MF_00185">
    <property type="entry name" value="IPP_trans"/>
    <property type="match status" value="1"/>
</dbReference>
<dbReference type="InterPro" id="IPR039657">
    <property type="entry name" value="Dimethylallyltransferase"/>
</dbReference>
<dbReference type="InterPro" id="IPR018022">
    <property type="entry name" value="IPT"/>
</dbReference>
<dbReference type="InterPro" id="IPR027417">
    <property type="entry name" value="P-loop_NTPase"/>
</dbReference>
<dbReference type="NCBIfam" id="TIGR00174">
    <property type="entry name" value="miaA"/>
    <property type="match status" value="1"/>
</dbReference>
<dbReference type="PANTHER" id="PTHR11088">
    <property type="entry name" value="TRNA DIMETHYLALLYLTRANSFERASE"/>
    <property type="match status" value="1"/>
</dbReference>
<dbReference type="PANTHER" id="PTHR11088:SF60">
    <property type="entry name" value="TRNA DIMETHYLALLYLTRANSFERASE"/>
    <property type="match status" value="1"/>
</dbReference>
<dbReference type="Pfam" id="PF01715">
    <property type="entry name" value="IPPT"/>
    <property type="match status" value="1"/>
</dbReference>
<dbReference type="SUPFAM" id="SSF52540">
    <property type="entry name" value="P-loop containing nucleoside triphosphate hydrolases"/>
    <property type="match status" value="2"/>
</dbReference>
<sequence length="314" mass="33894">MAEEPQRSPAPTSPFAFTVPSNPLSDLPDIPSDRPVLIAGPTASGKSALAARLVEDGGGVVVNADALQVYDCWRLLSARPSAAEEAALPHRLYGHVGARQTYSAGHWLKEVAAVLAEGLRPVIVGGTGLYFSALTEGLAEIPHTPPEVRAEADARLAEAGLARMVAELDAETAARIDLQNPARVQRAWEVLRATGRGLARWQAETAPPLLPLSDATALVIRPDPAWLAQRIDSRFDLMMADGALDEVRATLPGWDPALPSARAIGAPELVAHLRGEIPLDEAIAAAKLASRQYAKRQRTWFRNRMRLWHEIRLP</sequence>
<feature type="chain" id="PRO_0000377284" description="tRNA dimethylallyltransferase">
    <location>
        <begin position="1"/>
        <end position="314"/>
    </location>
</feature>
<feature type="region of interest" description="Disordered" evidence="2">
    <location>
        <begin position="1"/>
        <end position="24"/>
    </location>
</feature>
<feature type="binding site" evidence="1">
    <location>
        <begin position="40"/>
        <end position="47"/>
    </location>
    <ligand>
        <name>ATP</name>
        <dbReference type="ChEBI" id="CHEBI:30616"/>
    </ligand>
</feature>
<feature type="binding site" evidence="1">
    <location>
        <begin position="42"/>
        <end position="47"/>
    </location>
    <ligand>
        <name>substrate</name>
    </ligand>
</feature>
<feature type="site" description="Interaction with substrate tRNA" evidence="1">
    <location>
        <position position="127"/>
    </location>
</feature>
<feature type="site" description="Interaction with substrate tRNA" evidence="1">
    <location>
        <position position="149"/>
    </location>
</feature>
<gene>
    <name evidence="1" type="primary">miaA</name>
    <name type="ordered locus">Rsph17029_1361</name>
</gene>
<accession>A3PJF5</accession>
<keyword id="KW-0067">ATP-binding</keyword>
<keyword id="KW-0460">Magnesium</keyword>
<keyword id="KW-0547">Nucleotide-binding</keyword>
<keyword id="KW-0808">Transferase</keyword>
<keyword id="KW-0819">tRNA processing</keyword>
<reference key="1">
    <citation type="submission" date="2007-02" db="EMBL/GenBank/DDBJ databases">
        <title>Complete sequence of chromosome 1 of Rhodobacter sphaeroides ATCC 17029.</title>
        <authorList>
            <person name="Copeland A."/>
            <person name="Lucas S."/>
            <person name="Lapidus A."/>
            <person name="Barry K."/>
            <person name="Detter J.C."/>
            <person name="Glavina del Rio T."/>
            <person name="Hammon N."/>
            <person name="Israni S."/>
            <person name="Dalin E."/>
            <person name="Tice H."/>
            <person name="Pitluck S."/>
            <person name="Kiss H."/>
            <person name="Brettin T."/>
            <person name="Bruce D."/>
            <person name="Han C."/>
            <person name="Tapia R."/>
            <person name="Gilna P."/>
            <person name="Schmutz J."/>
            <person name="Larimer F."/>
            <person name="Land M."/>
            <person name="Hauser L."/>
            <person name="Kyrpides N."/>
            <person name="Mikhailova N."/>
            <person name="Richardson P."/>
            <person name="Mackenzie C."/>
            <person name="Choudhary M."/>
            <person name="Donohue T.J."/>
            <person name="Kaplan S."/>
        </authorList>
    </citation>
    <scope>NUCLEOTIDE SEQUENCE [LARGE SCALE GENOMIC DNA]</scope>
    <source>
        <strain>ATCC 17029 / ATH 2.4.9</strain>
    </source>
</reference>
<proteinExistence type="inferred from homology"/>